<name>PURA_BACTN</name>
<feature type="chain" id="PRO_0000095147" description="Adenylosuccinate synthetase">
    <location>
        <begin position="1"/>
        <end position="423"/>
    </location>
</feature>
<feature type="active site" description="Proton acceptor" evidence="1">
    <location>
        <position position="13"/>
    </location>
</feature>
<feature type="active site" description="Proton donor" evidence="1">
    <location>
        <position position="41"/>
    </location>
</feature>
<feature type="binding site" evidence="1">
    <location>
        <begin position="12"/>
        <end position="18"/>
    </location>
    <ligand>
        <name>GTP</name>
        <dbReference type="ChEBI" id="CHEBI:37565"/>
    </ligand>
</feature>
<feature type="binding site" description="in other chain" evidence="1">
    <location>
        <begin position="13"/>
        <end position="16"/>
    </location>
    <ligand>
        <name>IMP</name>
        <dbReference type="ChEBI" id="CHEBI:58053"/>
        <note>ligand shared between dimeric partners</note>
    </ligand>
</feature>
<feature type="binding site" evidence="1">
    <location>
        <position position="13"/>
    </location>
    <ligand>
        <name>Mg(2+)</name>
        <dbReference type="ChEBI" id="CHEBI:18420"/>
    </ligand>
</feature>
<feature type="binding site" description="in other chain" evidence="1">
    <location>
        <begin position="38"/>
        <end position="41"/>
    </location>
    <ligand>
        <name>IMP</name>
        <dbReference type="ChEBI" id="CHEBI:58053"/>
        <note>ligand shared between dimeric partners</note>
    </ligand>
</feature>
<feature type="binding site" evidence="1">
    <location>
        <begin position="40"/>
        <end position="42"/>
    </location>
    <ligand>
        <name>GTP</name>
        <dbReference type="ChEBI" id="CHEBI:37565"/>
    </ligand>
</feature>
<feature type="binding site" evidence="1">
    <location>
        <position position="40"/>
    </location>
    <ligand>
        <name>Mg(2+)</name>
        <dbReference type="ChEBI" id="CHEBI:18420"/>
    </ligand>
</feature>
<feature type="binding site" description="in other chain" evidence="1">
    <location>
        <position position="129"/>
    </location>
    <ligand>
        <name>IMP</name>
        <dbReference type="ChEBI" id="CHEBI:58053"/>
        <note>ligand shared between dimeric partners</note>
    </ligand>
</feature>
<feature type="binding site" evidence="1">
    <location>
        <position position="143"/>
    </location>
    <ligand>
        <name>IMP</name>
        <dbReference type="ChEBI" id="CHEBI:58053"/>
        <note>ligand shared between dimeric partners</note>
    </ligand>
</feature>
<feature type="binding site" description="in other chain" evidence="1">
    <location>
        <position position="221"/>
    </location>
    <ligand>
        <name>IMP</name>
        <dbReference type="ChEBI" id="CHEBI:58053"/>
        <note>ligand shared between dimeric partners</note>
    </ligand>
</feature>
<feature type="binding site" description="in other chain" evidence="1">
    <location>
        <position position="236"/>
    </location>
    <ligand>
        <name>IMP</name>
        <dbReference type="ChEBI" id="CHEBI:58053"/>
        <note>ligand shared between dimeric partners</note>
    </ligand>
</feature>
<feature type="binding site" evidence="1">
    <location>
        <begin position="296"/>
        <end position="302"/>
    </location>
    <ligand>
        <name>substrate</name>
    </ligand>
</feature>
<feature type="binding site" description="in other chain" evidence="1">
    <location>
        <position position="300"/>
    </location>
    <ligand>
        <name>IMP</name>
        <dbReference type="ChEBI" id="CHEBI:58053"/>
        <note>ligand shared between dimeric partners</note>
    </ligand>
</feature>
<feature type="binding site" evidence="1">
    <location>
        <position position="302"/>
    </location>
    <ligand>
        <name>GTP</name>
        <dbReference type="ChEBI" id="CHEBI:37565"/>
    </ligand>
</feature>
<feature type="binding site" evidence="1">
    <location>
        <begin position="408"/>
        <end position="410"/>
    </location>
    <ligand>
        <name>GTP</name>
        <dbReference type="ChEBI" id="CHEBI:37565"/>
    </ligand>
</feature>
<evidence type="ECO:0000255" key="1">
    <source>
        <dbReference type="HAMAP-Rule" id="MF_00011"/>
    </source>
</evidence>
<accession>Q8A6N4</accession>
<reference key="1">
    <citation type="journal article" date="2003" name="Science">
        <title>A genomic view of the human-Bacteroides thetaiotaomicron symbiosis.</title>
        <authorList>
            <person name="Xu J."/>
            <person name="Bjursell M.K."/>
            <person name="Himrod J."/>
            <person name="Deng S."/>
            <person name="Carmichael L.K."/>
            <person name="Chiang H.C."/>
            <person name="Hooper L.V."/>
            <person name="Gordon J.I."/>
        </authorList>
    </citation>
    <scope>NUCLEOTIDE SEQUENCE [LARGE SCALE GENOMIC DNA]</scope>
    <source>
        <strain>ATCC 29148 / DSM 2079 / JCM 5827 / CCUG 10774 / NCTC 10582 / VPI-5482 / E50</strain>
    </source>
</reference>
<proteinExistence type="inferred from homology"/>
<gene>
    <name evidence="1" type="primary">purA</name>
    <name type="ordered locus">BT_1843</name>
</gene>
<protein>
    <recommendedName>
        <fullName evidence="1">Adenylosuccinate synthetase</fullName>
        <shortName evidence="1">AMPSase</shortName>
        <shortName evidence="1">AdSS</shortName>
        <ecNumber evidence="1">6.3.4.4</ecNumber>
    </recommendedName>
    <alternativeName>
        <fullName evidence="1">IMP--aspartate ligase</fullName>
    </alternativeName>
</protein>
<sequence>MKVDVLLGLQWGDEGKGKVVDVLTPKYDVVARFQGGPNAGHTLEFEGQKYVLRSIPSGIFQGDKVNIIGNGVVLDPALFKAEAEALEASGHPLKERLHISKKAHLILPTHRILDAAYEAAKGDAKVGTTGKGIGPTYTDKVSRNGVRVGDILHNFEQKYGAAKARHEQILKSLNYEYDLTELEKAWMEGIEYLKQFHFVDSEHEVNNYLKDGKSVLCEGAQGTMLDIDFGSYPFVTSSNTVCAGACTGLGVAPNRIGEVFGIFKAYCTRVGAGPFPTELFDETGDKMCTLGHEFGSVTGRKRRCGWIDLVALKYSVMINGVTKLIMMKSDVLDTFDTIKACVAYKVDGEEIDYFPYDITEGVEPVYAELPGWKTDMTKMQSEDEFPEEFNAYLTFLEEQLGVEIKIVSVGPDRAQTIERYTEE</sequence>
<keyword id="KW-0963">Cytoplasm</keyword>
<keyword id="KW-0342">GTP-binding</keyword>
<keyword id="KW-0436">Ligase</keyword>
<keyword id="KW-0460">Magnesium</keyword>
<keyword id="KW-0479">Metal-binding</keyword>
<keyword id="KW-0547">Nucleotide-binding</keyword>
<keyword id="KW-0658">Purine biosynthesis</keyword>
<keyword id="KW-1185">Reference proteome</keyword>
<comment type="function">
    <text evidence="1">Plays an important role in the de novo pathway of purine nucleotide biosynthesis. Catalyzes the first committed step in the biosynthesis of AMP from IMP.</text>
</comment>
<comment type="catalytic activity">
    <reaction evidence="1">
        <text>IMP + L-aspartate + GTP = N(6)-(1,2-dicarboxyethyl)-AMP + GDP + phosphate + 2 H(+)</text>
        <dbReference type="Rhea" id="RHEA:15753"/>
        <dbReference type="ChEBI" id="CHEBI:15378"/>
        <dbReference type="ChEBI" id="CHEBI:29991"/>
        <dbReference type="ChEBI" id="CHEBI:37565"/>
        <dbReference type="ChEBI" id="CHEBI:43474"/>
        <dbReference type="ChEBI" id="CHEBI:57567"/>
        <dbReference type="ChEBI" id="CHEBI:58053"/>
        <dbReference type="ChEBI" id="CHEBI:58189"/>
        <dbReference type="EC" id="6.3.4.4"/>
    </reaction>
</comment>
<comment type="cofactor">
    <cofactor evidence="1">
        <name>Mg(2+)</name>
        <dbReference type="ChEBI" id="CHEBI:18420"/>
    </cofactor>
    <text evidence="1">Binds 1 Mg(2+) ion per subunit.</text>
</comment>
<comment type="pathway">
    <text evidence="1">Purine metabolism; AMP biosynthesis via de novo pathway; AMP from IMP: step 1/2.</text>
</comment>
<comment type="subunit">
    <text evidence="1">Homodimer.</text>
</comment>
<comment type="subcellular location">
    <subcellularLocation>
        <location evidence="1">Cytoplasm</location>
    </subcellularLocation>
</comment>
<comment type="similarity">
    <text evidence="1">Belongs to the adenylosuccinate synthetase family.</text>
</comment>
<organism>
    <name type="scientific">Bacteroides thetaiotaomicron (strain ATCC 29148 / DSM 2079 / JCM 5827 / CCUG 10774 / NCTC 10582 / VPI-5482 / E50)</name>
    <dbReference type="NCBI Taxonomy" id="226186"/>
    <lineage>
        <taxon>Bacteria</taxon>
        <taxon>Pseudomonadati</taxon>
        <taxon>Bacteroidota</taxon>
        <taxon>Bacteroidia</taxon>
        <taxon>Bacteroidales</taxon>
        <taxon>Bacteroidaceae</taxon>
        <taxon>Bacteroides</taxon>
    </lineage>
</organism>
<dbReference type="EC" id="6.3.4.4" evidence="1"/>
<dbReference type="EMBL" id="AE015928">
    <property type="protein sequence ID" value="AAO76950.1"/>
    <property type="molecule type" value="Genomic_DNA"/>
</dbReference>
<dbReference type="RefSeq" id="NP_810756.1">
    <property type="nucleotide sequence ID" value="NC_004663.1"/>
</dbReference>
<dbReference type="RefSeq" id="WP_008763215.1">
    <property type="nucleotide sequence ID" value="NZ_UYXG01000014.1"/>
</dbReference>
<dbReference type="SMR" id="Q8A6N4"/>
<dbReference type="FunCoup" id="Q8A6N4">
    <property type="interactions" value="562"/>
</dbReference>
<dbReference type="STRING" id="226186.BT_1843"/>
<dbReference type="PaxDb" id="226186-BT_1843"/>
<dbReference type="EnsemblBacteria" id="AAO76950">
    <property type="protein sequence ID" value="AAO76950"/>
    <property type="gene ID" value="BT_1843"/>
</dbReference>
<dbReference type="KEGG" id="bth:BT_1843"/>
<dbReference type="PATRIC" id="fig|226186.12.peg.1893"/>
<dbReference type="eggNOG" id="COG0104">
    <property type="taxonomic scope" value="Bacteria"/>
</dbReference>
<dbReference type="HOGENOM" id="CLU_029848_0_0_10"/>
<dbReference type="InParanoid" id="Q8A6N4"/>
<dbReference type="OrthoDB" id="9807553at2"/>
<dbReference type="UniPathway" id="UPA00075">
    <property type="reaction ID" value="UER00335"/>
</dbReference>
<dbReference type="Proteomes" id="UP000001414">
    <property type="component" value="Chromosome"/>
</dbReference>
<dbReference type="GO" id="GO:0005737">
    <property type="term" value="C:cytoplasm"/>
    <property type="evidence" value="ECO:0000318"/>
    <property type="project" value="GO_Central"/>
</dbReference>
<dbReference type="GO" id="GO:0004019">
    <property type="term" value="F:adenylosuccinate synthase activity"/>
    <property type="evidence" value="ECO:0000318"/>
    <property type="project" value="GO_Central"/>
</dbReference>
<dbReference type="GO" id="GO:0005525">
    <property type="term" value="F:GTP binding"/>
    <property type="evidence" value="ECO:0007669"/>
    <property type="project" value="UniProtKB-UniRule"/>
</dbReference>
<dbReference type="GO" id="GO:0000287">
    <property type="term" value="F:magnesium ion binding"/>
    <property type="evidence" value="ECO:0007669"/>
    <property type="project" value="UniProtKB-UniRule"/>
</dbReference>
<dbReference type="GO" id="GO:0044208">
    <property type="term" value="P:'de novo' AMP biosynthetic process"/>
    <property type="evidence" value="ECO:0000318"/>
    <property type="project" value="GO_Central"/>
</dbReference>
<dbReference type="GO" id="GO:0046040">
    <property type="term" value="P:IMP metabolic process"/>
    <property type="evidence" value="ECO:0000318"/>
    <property type="project" value="GO_Central"/>
</dbReference>
<dbReference type="CDD" id="cd03108">
    <property type="entry name" value="AdSS"/>
    <property type="match status" value="1"/>
</dbReference>
<dbReference type="FunFam" id="1.10.300.10:FF:000003">
    <property type="entry name" value="Adenylosuccinate synthetase"/>
    <property type="match status" value="1"/>
</dbReference>
<dbReference type="FunFam" id="3.90.170.10:FF:000001">
    <property type="entry name" value="Adenylosuccinate synthetase"/>
    <property type="match status" value="1"/>
</dbReference>
<dbReference type="Gene3D" id="3.40.440.10">
    <property type="entry name" value="Adenylosuccinate Synthetase, subunit A, domain 1"/>
    <property type="match status" value="1"/>
</dbReference>
<dbReference type="Gene3D" id="1.10.300.10">
    <property type="entry name" value="Adenylosuccinate Synthetase, subunit A, domain 2"/>
    <property type="match status" value="1"/>
</dbReference>
<dbReference type="Gene3D" id="3.90.170.10">
    <property type="entry name" value="Adenylosuccinate Synthetase, subunit A, domain 3"/>
    <property type="match status" value="1"/>
</dbReference>
<dbReference type="HAMAP" id="MF_00011">
    <property type="entry name" value="Adenylosucc_synth"/>
    <property type="match status" value="1"/>
</dbReference>
<dbReference type="InterPro" id="IPR018220">
    <property type="entry name" value="Adenylosuccin_syn_GTP-bd"/>
</dbReference>
<dbReference type="InterPro" id="IPR033128">
    <property type="entry name" value="Adenylosuccin_syn_Lys_AS"/>
</dbReference>
<dbReference type="InterPro" id="IPR042109">
    <property type="entry name" value="Adenylosuccinate_synth_dom1"/>
</dbReference>
<dbReference type="InterPro" id="IPR042110">
    <property type="entry name" value="Adenylosuccinate_synth_dom2"/>
</dbReference>
<dbReference type="InterPro" id="IPR042111">
    <property type="entry name" value="Adenylosuccinate_synth_dom3"/>
</dbReference>
<dbReference type="InterPro" id="IPR001114">
    <property type="entry name" value="Adenylosuccinate_synthetase"/>
</dbReference>
<dbReference type="InterPro" id="IPR027417">
    <property type="entry name" value="P-loop_NTPase"/>
</dbReference>
<dbReference type="NCBIfam" id="NF002223">
    <property type="entry name" value="PRK01117.1"/>
    <property type="match status" value="1"/>
</dbReference>
<dbReference type="NCBIfam" id="TIGR00184">
    <property type="entry name" value="purA"/>
    <property type="match status" value="1"/>
</dbReference>
<dbReference type="PANTHER" id="PTHR11846">
    <property type="entry name" value="ADENYLOSUCCINATE SYNTHETASE"/>
    <property type="match status" value="1"/>
</dbReference>
<dbReference type="PANTHER" id="PTHR11846:SF0">
    <property type="entry name" value="ADENYLOSUCCINATE SYNTHETASE"/>
    <property type="match status" value="1"/>
</dbReference>
<dbReference type="Pfam" id="PF00709">
    <property type="entry name" value="Adenylsucc_synt"/>
    <property type="match status" value="1"/>
</dbReference>
<dbReference type="SMART" id="SM00788">
    <property type="entry name" value="Adenylsucc_synt"/>
    <property type="match status" value="1"/>
</dbReference>
<dbReference type="SUPFAM" id="SSF52540">
    <property type="entry name" value="P-loop containing nucleoside triphosphate hydrolases"/>
    <property type="match status" value="1"/>
</dbReference>
<dbReference type="PROSITE" id="PS01266">
    <property type="entry name" value="ADENYLOSUCCIN_SYN_1"/>
    <property type="match status" value="1"/>
</dbReference>
<dbReference type="PROSITE" id="PS00513">
    <property type="entry name" value="ADENYLOSUCCIN_SYN_2"/>
    <property type="match status" value="1"/>
</dbReference>